<protein>
    <recommendedName>
        <fullName>Green-sensitive opsin-2</fullName>
    </recommendedName>
    <alternativeName>
        <fullName>Green cone photoreceptor pigment 2</fullName>
    </alternativeName>
    <alternativeName>
        <fullName>Opsin RH2-2</fullName>
    </alternativeName>
    <alternativeName>
        <fullName>Opsin-1, medium-wave-sensitive 2</fullName>
    </alternativeName>
</protein>
<evidence type="ECO:0000250" key="1"/>
<evidence type="ECO:0000255" key="2"/>
<evidence type="ECO:0000255" key="3">
    <source>
        <dbReference type="PROSITE-ProRule" id="PRU00521"/>
    </source>
</evidence>
<evidence type="ECO:0000256" key="4">
    <source>
        <dbReference type="SAM" id="MobiDB-lite"/>
    </source>
</evidence>
<evidence type="ECO:0000269" key="5">
    <source>
    </source>
</evidence>
<evidence type="ECO:0000305" key="6"/>
<accession>Q8AYM8</accession>
<gene>
    <name type="primary">opn1mw2</name>
    <name type="synonym">rh22</name>
</gene>
<feature type="chain" id="PRO_0000197776" description="Green-sensitive opsin-2">
    <location>
        <begin position="1"/>
        <end position="349"/>
    </location>
</feature>
<feature type="topological domain" description="Extracellular" evidence="2">
    <location>
        <begin position="1"/>
        <end position="36"/>
    </location>
</feature>
<feature type="transmembrane region" description="Helical; Name=1" evidence="2">
    <location>
        <begin position="37"/>
        <end position="61"/>
    </location>
</feature>
<feature type="topological domain" description="Cytoplasmic" evidence="2">
    <location>
        <begin position="62"/>
        <end position="73"/>
    </location>
</feature>
<feature type="transmembrane region" description="Helical; Name=2" evidence="2">
    <location>
        <begin position="74"/>
        <end position="99"/>
    </location>
</feature>
<feature type="topological domain" description="Extracellular" evidence="2">
    <location>
        <begin position="100"/>
        <end position="113"/>
    </location>
</feature>
<feature type="transmembrane region" description="Helical; Name=3" evidence="2">
    <location>
        <begin position="114"/>
        <end position="133"/>
    </location>
</feature>
<feature type="topological domain" description="Cytoplasmic" evidence="2">
    <location>
        <begin position="134"/>
        <end position="152"/>
    </location>
</feature>
<feature type="transmembrane region" description="Helical; Name=4" evidence="2">
    <location>
        <begin position="153"/>
        <end position="176"/>
    </location>
</feature>
<feature type="topological domain" description="Extracellular" evidence="2">
    <location>
        <begin position="177"/>
        <end position="202"/>
    </location>
</feature>
<feature type="transmembrane region" description="Helical; Name=5" evidence="2">
    <location>
        <begin position="203"/>
        <end position="230"/>
    </location>
</feature>
<feature type="topological domain" description="Cytoplasmic" evidence="2">
    <location>
        <begin position="231"/>
        <end position="252"/>
    </location>
</feature>
<feature type="transmembrane region" description="Helical; Name=6" evidence="2">
    <location>
        <begin position="253"/>
        <end position="276"/>
    </location>
</feature>
<feature type="topological domain" description="Extracellular" evidence="2">
    <location>
        <begin position="277"/>
        <end position="284"/>
    </location>
</feature>
<feature type="transmembrane region" description="Helical; Name=7" evidence="2">
    <location>
        <begin position="285"/>
        <end position="309"/>
    </location>
</feature>
<feature type="topological domain" description="Cytoplasmic" evidence="2">
    <location>
        <begin position="310"/>
        <end position="349"/>
    </location>
</feature>
<feature type="region of interest" description="Disordered" evidence="4">
    <location>
        <begin position="328"/>
        <end position="349"/>
    </location>
</feature>
<feature type="compositionally biased region" description="Low complexity" evidence="4">
    <location>
        <begin position="334"/>
        <end position="349"/>
    </location>
</feature>
<feature type="modified residue" description="N6-(retinylidene)lysine" evidence="1">
    <location>
        <position position="296"/>
    </location>
</feature>
<feature type="glycosylation site" description="N-linked (GlcNAc...) asparagine" evidence="2">
    <location>
        <position position="2"/>
    </location>
</feature>
<feature type="glycosylation site" description="N-linked (GlcNAc...) asparagine" evidence="2">
    <location>
        <position position="15"/>
    </location>
</feature>
<feature type="glycosylation site" description="N-linked (GlcNAc...) asparagine" evidence="2">
    <location>
        <position position="200"/>
    </location>
</feature>
<feature type="disulfide bond" evidence="3">
    <location>
        <begin position="110"/>
        <end position="187"/>
    </location>
</feature>
<feature type="sequence conflict" description="In Ref. 1; mRNA." evidence="6" ref="1">
    <original>F</original>
    <variation>Y</variation>
    <location>
        <position position="198"/>
    </location>
</feature>
<feature type="sequence conflict" description="In Ref. 1; mRNA." evidence="6" ref="1">
    <original>E</original>
    <variation>D</variation>
    <location>
        <position position="332"/>
    </location>
</feature>
<dbReference type="EMBL" id="AB087806">
    <property type="protein sequence ID" value="BAC24130.1"/>
    <property type="molecule type" value="Genomic_DNA"/>
</dbReference>
<dbReference type="EMBL" id="BC055605">
    <property type="protein sequence ID" value="AAH55605.1"/>
    <property type="molecule type" value="mRNA"/>
</dbReference>
<dbReference type="RefSeq" id="NP_878311.1">
    <property type="nucleotide sequence ID" value="NM_182891.2"/>
</dbReference>
<dbReference type="SMR" id="Q8AYM8"/>
<dbReference type="FunCoup" id="Q8AYM8">
    <property type="interactions" value="45"/>
</dbReference>
<dbReference type="STRING" id="7955.ENSDARP00000011837"/>
<dbReference type="GlyCosmos" id="Q8AYM8">
    <property type="glycosylation" value="3 sites, No reported glycans"/>
</dbReference>
<dbReference type="GeneID" id="360151"/>
<dbReference type="KEGG" id="dre:360151"/>
<dbReference type="AGR" id="ZFIN:ZDB-GENE-030728-5"/>
<dbReference type="CTD" id="728458"/>
<dbReference type="ZFIN" id="ZDB-GENE-030728-5">
    <property type="gene designation" value="opn1mw2"/>
</dbReference>
<dbReference type="InParanoid" id="Q8AYM8"/>
<dbReference type="OrthoDB" id="5962323at2759"/>
<dbReference type="PhylomeDB" id="Q8AYM8"/>
<dbReference type="PRO" id="PR:Q8AYM8"/>
<dbReference type="Proteomes" id="UP000000437">
    <property type="component" value="Chromosome 6"/>
</dbReference>
<dbReference type="GO" id="GO:0001750">
    <property type="term" value="C:photoreceptor outer segment"/>
    <property type="evidence" value="ECO:0000318"/>
    <property type="project" value="GO_Central"/>
</dbReference>
<dbReference type="GO" id="GO:0005886">
    <property type="term" value="C:plasma membrane"/>
    <property type="evidence" value="ECO:0000318"/>
    <property type="project" value="GO_Central"/>
</dbReference>
<dbReference type="GO" id="GO:0008020">
    <property type="term" value="F:G protein-coupled photoreceptor activity"/>
    <property type="evidence" value="ECO:0000318"/>
    <property type="project" value="GO_Central"/>
</dbReference>
<dbReference type="GO" id="GO:0071482">
    <property type="term" value="P:cellular response to light stimulus"/>
    <property type="evidence" value="ECO:0000318"/>
    <property type="project" value="GO_Central"/>
</dbReference>
<dbReference type="GO" id="GO:0007186">
    <property type="term" value="P:G protein-coupled receptor signaling pathway"/>
    <property type="evidence" value="ECO:0000318"/>
    <property type="project" value="GO_Central"/>
</dbReference>
<dbReference type="GO" id="GO:0007602">
    <property type="term" value="P:phototransduction"/>
    <property type="evidence" value="ECO:0000318"/>
    <property type="project" value="GO_Central"/>
</dbReference>
<dbReference type="GO" id="GO:0007601">
    <property type="term" value="P:visual perception"/>
    <property type="evidence" value="ECO:0007669"/>
    <property type="project" value="UniProtKB-KW"/>
</dbReference>
<dbReference type="FunFam" id="1.20.1070.10:FF:000018">
    <property type="entry name" value="Rhodopsin"/>
    <property type="match status" value="1"/>
</dbReference>
<dbReference type="Gene3D" id="1.20.1070.10">
    <property type="entry name" value="Rhodopsin 7-helix transmembrane proteins"/>
    <property type="match status" value="1"/>
</dbReference>
<dbReference type="InterPro" id="IPR050125">
    <property type="entry name" value="GPCR_opsins"/>
</dbReference>
<dbReference type="InterPro" id="IPR000276">
    <property type="entry name" value="GPCR_Rhodpsn"/>
</dbReference>
<dbReference type="InterPro" id="IPR017452">
    <property type="entry name" value="GPCR_Rhodpsn_7TM"/>
</dbReference>
<dbReference type="InterPro" id="IPR001760">
    <property type="entry name" value="Opsin"/>
</dbReference>
<dbReference type="InterPro" id="IPR027430">
    <property type="entry name" value="Retinal_BS"/>
</dbReference>
<dbReference type="InterPro" id="IPR000732">
    <property type="entry name" value="Rhodopsin"/>
</dbReference>
<dbReference type="InterPro" id="IPR019477">
    <property type="entry name" value="Rhodopsin_N"/>
</dbReference>
<dbReference type="PANTHER" id="PTHR24240">
    <property type="entry name" value="OPSIN"/>
    <property type="match status" value="1"/>
</dbReference>
<dbReference type="Pfam" id="PF00001">
    <property type="entry name" value="7tm_1"/>
    <property type="match status" value="1"/>
</dbReference>
<dbReference type="Pfam" id="PF10413">
    <property type="entry name" value="Rhodopsin_N"/>
    <property type="match status" value="1"/>
</dbReference>
<dbReference type="PRINTS" id="PR00237">
    <property type="entry name" value="GPCRRHODOPSN"/>
</dbReference>
<dbReference type="PRINTS" id="PR00238">
    <property type="entry name" value="OPSIN"/>
</dbReference>
<dbReference type="PRINTS" id="PR00579">
    <property type="entry name" value="RHODOPSIN"/>
</dbReference>
<dbReference type="SUPFAM" id="SSF81321">
    <property type="entry name" value="Family A G protein-coupled receptor-like"/>
    <property type="match status" value="1"/>
</dbReference>
<dbReference type="PROSITE" id="PS00237">
    <property type="entry name" value="G_PROTEIN_RECEP_F1_1"/>
    <property type="match status" value="1"/>
</dbReference>
<dbReference type="PROSITE" id="PS50262">
    <property type="entry name" value="G_PROTEIN_RECEP_F1_2"/>
    <property type="match status" value="1"/>
</dbReference>
<dbReference type="PROSITE" id="PS00238">
    <property type="entry name" value="OPSIN"/>
    <property type="match status" value="1"/>
</dbReference>
<name>OPSG2_DANRE</name>
<reference key="1">
    <citation type="journal article" date="2003" name="Genetics">
        <title>Gene duplication and spectral diversification of cone visual pigments of zebrafish.</title>
        <authorList>
            <person name="Chinen A."/>
            <person name="Hamaoka T."/>
            <person name="Yamada Y."/>
            <person name="Kawamura S."/>
        </authorList>
    </citation>
    <scope>NUCLEOTIDE SEQUENCE [GENOMIC DNA / MRNA]</scope>
    <scope>BIOPHYSICOCHEMICAL PROPERTIES</scope>
    <source>
        <strain>AB</strain>
        <tissue>Eye</tissue>
    </source>
</reference>
<reference key="2">
    <citation type="submission" date="2003-08" db="EMBL/GenBank/DDBJ databases">
        <authorList>
            <consortium name="NIH - Zebrafish Gene Collection (ZGC) project"/>
        </authorList>
    </citation>
    <scope>NUCLEOTIDE SEQUENCE [LARGE SCALE MRNA]</scope>
</reference>
<organism>
    <name type="scientific">Danio rerio</name>
    <name type="common">Zebrafish</name>
    <name type="synonym">Brachydanio rerio</name>
    <dbReference type="NCBI Taxonomy" id="7955"/>
    <lineage>
        <taxon>Eukaryota</taxon>
        <taxon>Metazoa</taxon>
        <taxon>Chordata</taxon>
        <taxon>Craniata</taxon>
        <taxon>Vertebrata</taxon>
        <taxon>Euteleostomi</taxon>
        <taxon>Actinopterygii</taxon>
        <taxon>Neopterygii</taxon>
        <taxon>Teleostei</taxon>
        <taxon>Ostariophysi</taxon>
        <taxon>Cypriniformes</taxon>
        <taxon>Danionidae</taxon>
        <taxon>Danioninae</taxon>
        <taxon>Danio</taxon>
    </lineage>
</organism>
<proteinExistence type="evidence at protein level"/>
<comment type="function">
    <text>Visual pigments are the light-absorbing molecules that mediate vision. They consist of an apoprotein, opsin, covalently linked to cis-retinal.</text>
</comment>
<comment type="biophysicochemical properties">
    <absorption>
        <max evidence="5">476 nm</max>
    </absorption>
</comment>
<comment type="subcellular location">
    <subcellularLocation>
        <location>Membrane</location>
        <topology>Multi-pass membrane protein</topology>
    </subcellularLocation>
</comment>
<comment type="PTM">
    <text evidence="1">Phosphorylated on some or all of the serine and threonine residues present in the C-terminal region.</text>
</comment>
<comment type="similarity">
    <text evidence="3">Belongs to the G-protein coupled receptor 1 family. Opsin subfamily.</text>
</comment>
<sequence length="349" mass="38706">MNGTEGNNFYIPMSNRTGLVRSPYEYTQYYLADPWQFKALAFYMFFLICFGLPINVLTLLVTAQHKKLRQPLNYILVNLAFAGTIMAFFGFTVTFYCSINGYMALGPTGCAIEGFFATLGGQVALWSLVVLAIERYIVVCKPMGSFKFSSNHAMAGIAFTWVMASSCAVPPLFGWSRYIPEGMQTSCGPDYYTLNPEFNNESYVLYMFSCHFCVPVTTIFFTYGSLVCTVKAAAAQQQESESTQKAEREVTRMVILMVLGFLVAWVPYASFAAWIFFNRGAAFSAQAMAIPAFFSKASALFNPIIYVLLNKQFRSCMLNTLFCGKSPLGDDESSSVSTSKTEVSSVSPA</sequence>
<keyword id="KW-0157">Chromophore</keyword>
<keyword id="KW-1015">Disulfide bond</keyword>
<keyword id="KW-0297">G-protein coupled receptor</keyword>
<keyword id="KW-0325">Glycoprotein</keyword>
<keyword id="KW-0472">Membrane</keyword>
<keyword id="KW-0597">Phosphoprotein</keyword>
<keyword id="KW-0600">Photoreceptor protein</keyword>
<keyword id="KW-0675">Receptor</keyword>
<keyword id="KW-1185">Reference proteome</keyword>
<keyword id="KW-0681">Retinal protein</keyword>
<keyword id="KW-0716">Sensory transduction</keyword>
<keyword id="KW-0807">Transducer</keyword>
<keyword id="KW-0812">Transmembrane</keyword>
<keyword id="KW-1133">Transmembrane helix</keyword>
<keyword id="KW-0844">Vision</keyword>